<organism>
    <name type="scientific">Lactobacillus acidophilus</name>
    <dbReference type="NCBI Taxonomy" id="1579"/>
    <lineage>
        <taxon>Bacteria</taxon>
        <taxon>Bacillati</taxon>
        <taxon>Bacillota</taxon>
        <taxon>Bacilli</taxon>
        <taxon>Lactobacillales</taxon>
        <taxon>Lactobacillaceae</taxon>
        <taxon>Lactobacillus</taxon>
    </lineage>
</organism>
<reference key="1">
    <citation type="journal article" date="2017" name="Nat. Chem. Biol.">
        <title>Parallel evolution of non-homologous isofunctional enzymes in methionine biosynthesis.</title>
        <authorList>
            <person name="Bastard K."/>
            <person name="Perret A."/>
            <person name="Mariage A."/>
            <person name="Bessonnet T."/>
            <person name="Pinet-Turpault A."/>
            <person name="Petit J.L."/>
            <person name="Darii E."/>
            <person name="Bazire P."/>
            <person name="Vergne-Vaxelaire C."/>
            <person name="Brewee C."/>
            <person name="Debard A."/>
            <person name="Pellouin V."/>
            <person name="Besnard-Gonnet M."/>
            <person name="Artiguenave F."/>
            <person name="Medigue C."/>
            <person name="Vallenet D."/>
            <person name="Danchin A."/>
            <person name="Zaparucha A."/>
            <person name="Weissenbach J."/>
            <person name="Salanoubat M."/>
            <person name="de Berardinis V."/>
        </authorList>
    </citation>
    <scope>NUCLEOTIDE SEQUENCE [GENOMIC DNA]</scope>
    <scope>FUNCTION</scope>
    <scope>CATALYTIC ACTIVITY</scope>
    <source>
        <strain>ATCC 4356 / DSM 20079 / CCUG 5917 / JCM 1132 / NBRC 13951 / NCIMB 8690 / NCTC 12980 / NRRL B-4495 / L917</strain>
    </source>
</reference>
<comment type="function">
    <text evidence="2">Transfers an acetyl group from acetyl-CoA to L-serine, forming acetyl-L-serine. In vitro, also has homoserine acetyl transferase activity.</text>
</comment>
<comment type="catalytic activity">
    <reaction evidence="1 2">
        <text>L-serine + acetyl-CoA = O-acetyl-L-serine + CoA</text>
        <dbReference type="Rhea" id="RHEA:24560"/>
        <dbReference type="ChEBI" id="CHEBI:33384"/>
        <dbReference type="ChEBI" id="CHEBI:57287"/>
        <dbReference type="ChEBI" id="CHEBI:57288"/>
        <dbReference type="ChEBI" id="CHEBI:58340"/>
        <dbReference type="EC" id="2.3.1.30"/>
    </reaction>
</comment>
<comment type="catalytic activity">
    <reaction evidence="2">
        <text>L-homoserine + acetyl-CoA = O-acetyl-L-homoserine + CoA</text>
        <dbReference type="Rhea" id="RHEA:13701"/>
        <dbReference type="ChEBI" id="CHEBI:57287"/>
        <dbReference type="ChEBI" id="CHEBI:57288"/>
        <dbReference type="ChEBI" id="CHEBI:57476"/>
        <dbReference type="ChEBI" id="CHEBI:57716"/>
        <dbReference type="EC" id="2.3.1.31"/>
    </reaction>
</comment>
<comment type="pathway">
    <text>Amino-acid biosynthesis; L-cysteine biosynthesis; L-cysteine from L-serine: step 1/2.</text>
</comment>
<comment type="subcellular location">
    <subcellularLocation>
        <location evidence="1">Cytoplasm</location>
    </subcellularLocation>
</comment>
<comment type="similarity">
    <text evidence="1">Belongs to the MetA family.</text>
</comment>
<sequence length="262" mass="30771">MANKVKIGILNLMHDKLDTQSHFIKVLPNADLTFFYPRMHYQNRPIPPEVNMTSEPLDINRVSEFDGFIITGAPIDQIDFSKITYIEEIRYLLQALDNHKIQQLYFCWGAMAALNYFYGIKKKILAEKIFGVFPHLITEPHPLLSGLSQGFMAPHARYAEMDKKQIMQDERLAINAVDDNSHLFMVSAKDNPERNFIFSHIEYGKDSLRDEYNREINAHPERHYKKPINYSMSNPSFQWQDTQKIFFNNWLKKVKDNKLVLN</sequence>
<proteinExistence type="evidence at protein level"/>
<protein>
    <recommendedName>
        <fullName evidence="1 4">Serine O-acetyltransferase</fullName>
        <shortName evidence="1 3">SAT</shortName>
        <ecNumber evidence="1 3">2.3.1.30</ecNumber>
    </recommendedName>
    <alternativeName>
        <fullName evidence="4">Homoserine O-acetyltransferase</fullName>
        <shortName evidence="3">HAT</shortName>
        <ecNumber evidence="2">2.3.1.31</ecNumber>
    </alternativeName>
    <alternativeName>
        <fullName evidence="4">Homoserine transacetylase</fullName>
        <shortName evidence="4">HTA</shortName>
    </alternativeName>
</protein>
<keyword id="KW-0012">Acyltransferase</keyword>
<keyword id="KW-0028">Amino-acid biosynthesis</keyword>
<keyword id="KW-0198">Cysteine biosynthesis</keyword>
<keyword id="KW-0963">Cytoplasm</keyword>
<keyword id="KW-0808">Transferase</keyword>
<accession>A0A1D3PCK2</accession>
<gene>
    <name evidence="5" type="primary">metA</name>
</gene>
<feature type="chain" id="PRO_0000440362" description="Serine O-acetyltransferase">
    <location>
        <begin position="1"/>
        <end position="262"/>
    </location>
</feature>
<feature type="active site" description="Acyl-thioester intermediate" evidence="1">
    <location>
        <position position="107"/>
    </location>
</feature>
<feature type="active site" description="Proton acceptor" evidence="1">
    <location>
        <position position="200"/>
    </location>
</feature>
<feature type="active site" evidence="1">
    <location>
        <position position="202"/>
    </location>
</feature>
<feature type="binding site" evidence="1">
    <location>
        <position position="128"/>
    </location>
    <ligand>
        <name>substrate</name>
    </ligand>
</feature>
<feature type="binding site" evidence="1">
    <location>
        <position position="214"/>
    </location>
    <ligand>
        <name>substrate</name>
    </ligand>
</feature>
<feature type="site" description="Important for acyl-CoA specificity" evidence="1">
    <location>
        <position position="76"/>
    </location>
</feature>
<feature type="site" description="Important for substrate specificity" evidence="1">
    <location>
        <position position="156"/>
    </location>
</feature>
<name>SAT_LACAI</name>
<dbReference type="EC" id="2.3.1.30" evidence="1 3"/>
<dbReference type="EC" id="2.3.1.31" evidence="2"/>
<dbReference type="EMBL" id="LT613639">
    <property type="protein sequence ID" value="SCN13863.1"/>
    <property type="molecule type" value="Genomic_DNA"/>
</dbReference>
<dbReference type="RefSeq" id="WP_003547771.1">
    <property type="nucleotide sequence ID" value="NZ_WPCN01000001.1"/>
</dbReference>
<dbReference type="SMR" id="A0A1D3PCK2"/>
<dbReference type="KEGG" id="laf:SD55_1232"/>
<dbReference type="OMA" id="IFSHIEY"/>
<dbReference type="UniPathway" id="UPA00136">
    <property type="reaction ID" value="UER00199"/>
</dbReference>
<dbReference type="GO" id="GO:0005737">
    <property type="term" value="C:cytoplasm"/>
    <property type="evidence" value="ECO:0007669"/>
    <property type="project" value="UniProtKB-SubCell"/>
</dbReference>
<dbReference type="GO" id="GO:0004414">
    <property type="term" value="F:homoserine O-acetyltransferase activity"/>
    <property type="evidence" value="ECO:0007669"/>
    <property type="project" value="UniProtKB-EC"/>
</dbReference>
<dbReference type="GO" id="GO:0008899">
    <property type="term" value="F:homoserine O-succinyltransferase activity"/>
    <property type="evidence" value="ECO:0007669"/>
    <property type="project" value="TreeGrafter"/>
</dbReference>
<dbReference type="GO" id="GO:0009001">
    <property type="term" value="F:serine O-acetyltransferase activity"/>
    <property type="evidence" value="ECO:0007669"/>
    <property type="project" value="UniProtKB-UniRule"/>
</dbReference>
<dbReference type="GO" id="GO:0006535">
    <property type="term" value="P:cysteine biosynthetic process from serine"/>
    <property type="evidence" value="ECO:0007669"/>
    <property type="project" value="UniProtKB-UniRule"/>
</dbReference>
<dbReference type="CDD" id="cd03131">
    <property type="entry name" value="GATase1_HTS"/>
    <property type="match status" value="1"/>
</dbReference>
<dbReference type="Gene3D" id="3.40.50.880">
    <property type="match status" value="1"/>
</dbReference>
<dbReference type="HAMAP" id="MF_00295">
    <property type="entry name" value="MetA_acyltransf"/>
    <property type="match status" value="1"/>
</dbReference>
<dbReference type="InterPro" id="IPR029062">
    <property type="entry name" value="Class_I_gatase-like"/>
</dbReference>
<dbReference type="InterPro" id="IPR033752">
    <property type="entry name" value="MetA_family"/>
</dbReference>
<dbReference type="PANTHER" id="PTHR20919">
    <property type="entry name" value="HOMOSERINE O-SUCCINYLTRANSFERASE"/>
    <property type="match status" value="1"/>
</dbReference>
<dbReference type="PANTHER" id="PTHR20919:SF0">
    <property type="entry name" value="HOMOSERINE O-SUCCINYLTRANSFERASE"/>
    <property type="match status" value="1"/>
</dbReference>
<dbReference type="Pfam" id="PF04204">
    <property type="entry name" value="HTS"/>
    <property type="match status" value="1"/>
</dbReference>
<dbReference type="PIRSF" id="PIRSF000450">
    <property type="entry name" value="H_ser_succinyltr"/>
    <property type="match status" value="1"/>
</dbReference>
<dbReference type="SUPFAM" id="SSF52317">
    <property type="entry name" value="Class I glutamine amidotransferase-like"/>
    <property type="match status" value="1"/>
</dbReference>
<evidence type="ECO:0000255" key="1">
    <source>
        <dbReference type="HAMAP-Rule" id="MF_00295"/>
    </source>
</evidence>
<evidence type="ECO:0000269" key="2">
    <source>
    </source>
</evidence>
<evidence type="ECO:0000303" key="3">
    <source>
    </source>
</evidence>
<evidence type="ECO:0000305" key="4"/>
<evidence type="ECO:0000312" key="5">
    <source>
        <dbReference type="EMBL" id="SCN13863.1"/>
    </source>
</evidence>